<keyword id="KW-0186">Copper</keyword>
<keyword id="KW-0325">Glycoprotein</keyword>
<keyword id="KW-0470">Melanin biosynthesis</keyword>
<keyword id="KW-0479">Metal-binding</keyword>
<keyword id="KW-0503">Monooxygenase</keyword>
<keyword id="KW-0560">Oxidoreductase</keyword>
<keyword id="KW-0964">Secreted</keyword>
<feature type="chain" id="PRO_0000271231" description="Phenoloxidase subunit 1">
    <location>
        <begin position="1" status="less than"/>
        <end position="195" status="greater than"/>
    </location>
</feature>
<feature type="binding site" evidence="2">
    <location>
        <position position="10"/>
    </location>
    <ligand>
        <name>Cu cation</name>
        <dbReference type="ChEBI" id="CHEBI:23378"/>
        <label>B</label>
    </ligand>
</feature>
<feature type="glycosylation site" description="N-linked (GlcNAc...) asparagine" evidence="3">
    <location>
        <position position="77"/>
    </location>
</feature>
<feature type="glycosylation site" description="N-linked (GlcNAc...) asparagine" evidence="3">
    <location>
        <position position="97"/>
    </location>
</feature>
<feature type="glycosylation site" description="N-linked (GlcNAc...) asparagine" evidence="3">
    <location>
        <position position="98"/>
    </location>
</feature>
<feature type="non-terminal residue" evidence="5">
    <location>
        <position position="1"/>
    </location>
</feature>
<feature type="non-terminal residue" evidence="5">
    <location>
        <position position="195"/>
    </location>
</feature>
<accession>P85046</accession>
<dbReference type="EC" id="1.14.18.1"/>
<dbReference type="SMR" id="P85046"/>
<dbReference type="GO" id="GO:0005576">
    <property type="term" value="C:extracellular region"/>
    <property type="evidence" value="ECO:0007669"/>
    <property type="project" value="UniProtKB-SubCell"/>
</dbReference>
<dbReference type="GO" id="GO:0046872">
    <property type="term" value="F:metal ion binding"/>
    <property type="evidence" value="ECO:0007669"/>
    <property type="project" value="UniProtKB-KW"/>
</dbReference>
<dbReference type="GO" id="GO:0004503">
    <property type="term" value="F:tyrosinase activity"/>
    <property type="evidence" value="ECO:0007669"/>
    <property type="project" value="UniProtKB-EC"/>
</dbReference>
<dbReference type="GO" id="GO:0042438">
    <property type="term" value="P:melanin biosynthetic process"/>
    <property type="evidence" value="ECO:0007669"/>
    <property type="project" value="UniProtKB-KW"/>
</dbReference>
<dbReference type="Gene3D" id="1.10.1280.10">
    <property type="entry name" value="Di-copper center containing domain from catechol oxidase"/>
    <property type="match status" value="1"/>
</dbReference>
<dbReference type="Gene3D" id="2.60.40.1520">
    <property type="entry name" value="Hemocyanin, C-terminal domain"/>
    <property type="match status" value="1"/>
</dbReference>
<dbReference type="InterPro" id="IPR008922">
    <property type="entry name" value="Di-copper_centre_dom_sf"/>
</dbReference>
<dbReference type="InterPro" id="IPR013788">
    <property type="entry name" value="Hemocyanin/hexamerin"/>
</dbReference>
<dbReference type="InterPro" id="IPR005203">
    <property type="entry name" value="Hemocyanin_C"/>
</dbReference>
<dbReference type="InterPro" id="IPR037020">
    <property type="entry name" value="Hemocyanin_C_sf"/>
</dbReference>
<dbReference type="InterPro" id="IPR014756">
    <property type="entry name" value="Ig_E-set"/>
</dbReference>
<dbReference type="InterPro" id="IPR002227">
    <property type="entry name" value="Tyrosinase_Cu-bd"/>
</dbReference>
<dbReference type="PANTHER" id="PTHR11511">
    <property type="entry name" value="LARVAL STORAGE PROTEIN/PHENOLOXIDASE"/>
    <property type="match status" value="1"/>
</dbReference>
<dbReference type="PANTHER" id="PTHR11511:SF4">
    <property type="entry name" value="PHENOLOXIDASE 2-RELATED"/>
    <property type="match status" value="1"/>
</dbReference>
<dbReference type="Pfam" id="PF03723">
    <property type="entry name" value="Hemocyanin_C"/>
    <property type="match status" value="1"/>
</dbReference>
<dbReference type="SUPFAM" id="SSF48056">
    <property type="entry name" value="Di-copper centre-containing domain"/>
    <property type="match status" value="1"/>
</dbReference>
<dbReference type="SUPFAM" id="SSF81296">
    <property type="entry name" value="E set domains"/>
    <property type="match status" value="1"/>
</dbReference>
<dbReference type="PROSITE" id="PS00498">
    <property type="entry name" value="TYROSINASE_2"/>
    <property type="match status" value="1"/>
</dbReference>
<evidence type="ECO:0000250" key="1"/>
<evidence type="ECO:0000250" key="2">
    <source>
        <dbReference type="UniProtKB" id="Q27451"/>
    </source>
</evidence>
<evidence type="ECO:0000255" key="3"/>
<evidence type="ECO:0000269" key="4">
    <source>
    </source>
</evidence>
<evidence type="ECO:0000303" key="5">
    <source>
    </source>
</evidence>
<evidence type="ECO:0000305" key="6"/>
<sequence>MRDPFFYRWHSYIDDIFQEHKERLRPYTEAQLNFNGITVTGVQVAPERGPTNTFQTSWQQSDVDLSRGMDFVAPRGNVTARFTHLNHTPFTYSIQVNNSSGAQRMGMVRIFLAPKTDERGNEMLFRDQRLMMIEMDKFVVSMRPGQNTIRRRSTESTVTIPFERTFRSLEESRPDQTTDAQQQFNFCGCGWPHHM</sequence>
<protein>
    <recommendedName>
        <fullName>Phenoloxidase subunit 1</fullName>
        <ecNumber>1.14.18.1</ecNumber>
    </recommendedName>
    <alternativeName>
        <fullName>PO-P1</fullName>
    </alternativeName>
</protein>
<proteinExistence type="evidence at transcript level"/>
<name>PRP1_SIMDA</name>
<organism>
    <name type="scientific">Simulium damnosum</name>
    <name type="common">Black fly</name>
    <dbReference type="NCBI Taxonomy" id="37338"/>
    <lineage>
        <taxon>Eukaryota</taxon>
        <taxon>Metazoa</taxon>
        <taxon>Ecdysozoa</taxon>
        <taxon>Arthropoda</taxon>
        <taxon>Hexapoda</taxon>
        <taxon>Insecta</taxon>
        <taxon>Pterygota</taxon>
        <taxon>Neoptera</taxon>
        <taxon>Endopterygota</taxon>
        <taxon>Diptera</taxon>
        <taxon>Nematocera</taxon>
        <taxon>Chironomoidea</taxon>
        <taxon>Simuliidae</taxon>
        <taxon>Simulium</taxon>
    </lineage>
</organism>
<reference evidence="6" key="1">
    <citation type="journal article" date="1997" name="Exp. Parasitol.">
        <title>Simulium damnosum s.l.: isolation and identification of prophenoloxidase following an infection with Onchocerca spp. using targeted differential display.</title>
        <authorList>
            <person name="Hagen H.-E."/>
            <person name="Klager S.L."/>
            <person name="McKerrow J.H."/>
            <person name="Ham P.J."/>
        </authorList>
    </citation>
    <scope>NUCLEOTIDE SEQUENCE [MRNA]</scope>
    <scope>INDUCTION</scope>
</reference>
<comment type="function">
    <text evidence="6">This is a copper-containing oxidase that functions in the formation of pigments such as melanins and other polyphenolic compounds. Catalyzes the rate-limiting conversions of tyrosine to DOPA, DOPA to DOPA-quinone and possibly 5,6 dihydroxyindole to indole-5'6 quinone.</text>
</comment>
<comment type="catalytic activity">
    <reaction>
        <text>2 L-dopa + O2 = 2 L-dopaquinone + 2 H2O</text>
        <dbReference type="Rhea" id="RHEA:34287"/>
        <dbReference type="ChEBI" id="CHEBI:15377"/>
        <dbReference type="ChEBI" id="CHEBI:15379"/>
        <dbReference type="ChEBI" id="CHEBI:57504"/>
        <dbReference type="ChEBI" id="CHEBI:57924"/>
        <dbReference type="EC" id="1.14.18.1"/>
    </reaction>
</comment>
<comment type="catalytic activity">
    <reaction>
        <text>L-tyrosine + O2 = L-dopaquinone + H2O</text>
        <dbReference type="Rhea" id="RHEA:18117"/>
        <dbReference type="ChEBI" id="CHEBI:15377"/>
        <dbReference type="ChEBI" id="CHEBI:15379"/>
        <dbReference type="ChEBI" id="CHEBI:57924"/>
        <dbReference type="ChEBI" id="CHEBI:58315"/>
        <dbReference type="EC" id="1.14.18.1"/>
    </reaction>
</comment>
<comment type="cofactor">
    <cofactor evidence="2">
        <name>Cu(2+)</name>
        <dbReference type="ChEBI" id="CHEBI:29036"/>
    </cofactor>
    <text evidence="2">Binds 2 copper ions per subunit.</text>
</comment>
<comment type="subunit">
    <text evidence="2">Heterodimer.</text>
</comment>
<comment type="subcellular location">
    <subcellularLocation>
        <location evidence="1">Secreted</location>
    </subcellularLocation>
</comment>
<comment type="induction">
    <text evidence="4">By infection with O.dukei and O.ochengi.</text>
</comment>
<comment type="similarity">
    <text evidence="3">Belongs to the tyrosinase family.</text>
</comment>